<feature type="chain" id="PRO_1000192449" description="Transcription antitermination protein NusB">
    <location>
        <begin position="1"/>
        <end position="156"/>
    </location>
</feature>
<gene>
    <name evidence="1" type="primary">nusB</name>
    <name type="ordered locus">JTY_2549</name>
</gene>
<keyword id="KW-0694">RNA-binding</keyword>
<keyword id="KW-0804">Transcription</keyword>
<keyword id="KW-0889">Transcription antitermination</keyword>
<keyword id="KW-0805">Transcription regulation</keyword>
<comment type="function">
    <text evidence="1">Involved in transcription antitermination. Required for transcription of ribosomal RNA (rRNA) genes. Binds specifically to the boxA antiterminator sequence of the ribosomal RNA (rrn) operons.</text>
</comment>
<comment type="similarity">
    <text evidence="1">Belongs to the NusB family.</text>
</comment>
<sequence length="156" mass="16784">MSDRKPVRGRHQARKRAVDLLFEAEVRGISAAEVVDTRAALAEAKPDIARLHPYTAAVARGVSEHAAHIDDLITAHLRGWTLDRLPAVDRAILRVSVWELLHAADVPEPVVVDEAVQLAKELSTDDSPGFVNGVLGQVMLVTPQLRAAAQAVRGGA</sequence>
<dbReference type="EMBL" id="AP010918">
    <property type="protein sequence ID" value="BAH26830.1"/>
    <property type="molecule type" value="Genomic_DNA"/>
</dbReference>
<dbReference type="RefSeq" id="WP_003412985.1">
    <property type="nucleotide sequence ID" value="NZ_CP014566.1"/>
</dbReference>
<dbReference type="SMR" id="C1AF01"/>
<dbReference type="GeneID" id="45426534"/>
<dbReference type="KEGG" id="mbt:JTY_2549"/>
<dbReference type="HOGENOM" id="CLU_087843_2_3_11"/>
<dbReference type="GO" id="GO:0005829">
    <property type="term" value="C:cytosol"/>
    <property type="evidence" value="ECO:0007669"/>
    <property type="project" value="TreeGrafter"/>
</dbReference>
<dbReference type="GO" id="GO:0003723">
    <property type="term" value="F:RNA binding"/>
    <property type="evidence" value="ECO:0007669"/>
    <property type="project" value="UniProtKB-UniRule"/>
</dbReference>
<dbReference type="GO" id="GO:0006353">
    <property type="term" value="P:DNA-templated transcription termination"/>
    <property type="evidence" value="ECO:0007669"/>
    <property type="project" value="UniProtKB-UniRule"/>
</dbReference>
<dbReference type="GO" id="GO:0031564">
    <property type="term" value="P:transcription antitermination"/>
    <property type="evidence" value="ECO:0007669"/>
    <property type="project" value="UniProtKB-KW"/>
</dbReference>
<dbReference type="CDD" id="cd00619">
    <property type="entry name" value="Terminator_NusB"/>
    <property type="match status" value="1"/>
</dbReference>
<dbReference type="Gene3D" id="1.10.940.10">
    <property type="entry name" value="NusB-like"/>
    <property type="match status" value="1"/>
</dbReference>
<dbReference type="HAMAP" id="MF_00073">
    <property type="entry name" value="NusB"/>
    <property type="match status" value="1"/>
</dbReference>
<dbReference type="InterPro" id="IPR035926">
    <property type="entry name" value="NusB-like_sf"/>
</dbReference>
<dbReference type="InterPro" id="IPR011605">
    <property type="entry name" value="NusB_fam"/>
</dbReference>
<dbReference type="InterPro" id="IPR006027">
    <property type="entry name" value="NusB_RsmB_TIM44"/>
</dbReference>
<dbReference type="NCBIfam" id="TIGR01951">
    <property type="entry name" value="nusB"/>
    <property type="match status" value="1"/>
</dbReference>
<dbReference type="PANTHER" id="PTHR11078:SF3">
    <property type="entry name" value="ANTITERMINATION NUSB DOMAIN-CONTAINING PROTEIN"/>
    <property type="match status" value="1"/>
</dbReference>
<dbReference type="PANTHER" id="PTHR11078">
    <property type="entry name" value="N UTILIZATION SUBSTANCE PROTEIN B-RELATED"/>
    <property type="match status" value="1"/>
</dbReference>
<dbReference type="Pfam" id="PF01029">
    <property type="entry name" value="NusB"/>
    <property type="match status" value="1"/>
</dbReference>
<dbReference type="SUPFAM" id="SSF48013">
    <property type="entry name" value="NusB-like"/>
    <property type="match status" value="1"/>
</dbReference>
<proteinExistence type="inferred from homology"/>
<reference key="1">
    <citation type="journal article" date="2009" name="Vaccine">
        <title>Whole genome sequence analysis of Mycobacterium bovis bacillus Calmette-Guerin (BCG) Tokyo 172: a comparative study of BCG vaccine substrains.</title>
        <authorList>
            <person name="Seki M."/>
            <person name="Honda I."/>
            <person name="Fujita I."/>
            <person name="Yano I."/>
            <person name="Yamamoto S."/>
            <person name="Koyama A."/>
        </authorList>
    </citation>
    <scope>NUCLEOTIDE SEQUENCE [LARGE SCALE GENOMIC DNA]</scope>
    <source>
        <strain>BCG / Tokyo 172 / ATCC 35737 / TMC 1019</strain>
    </source>
</reference>
<evidence type="ECO:0000255" key="1">
    <source>
        <dbReference type="HAMAP-Rule" id="MF_00073"/>
    </source>
</evidence>
<protein>
    <recommendedName>
        <fullName evidence="1">Transcription antitermination protein NusB</fullName>
    </recommendedName>
    <alternativeName>
        <fullName evidence="1">Antitermination factor NusB</fullName>
    </alternativeName>
</protein>
<organism>
    <name type="scientific">Mycobacterium bovis (strain BCG / Tokyo 172 / ATCC 35737 / TMC 1019)</name>
    <dbReference type="NCBI Taxonomy" id="561275"/>
    <lineage>
        <taxon>Bacteria</taxon>
        <taxon>Bacillati</taxon>
        <taxon>Actinomycetota</taxon>
        <taxon>Actinomycetes</taxon>
        <taxon>Mycobacteriales</taxon>
        <taxon>Mycobacteriaceae</taxon>
        <taxon>Mycobacterium</taxon>
        <taxon>Mycobacterium tuberculosis complex</taxon>
    </lineage>
</organism>
<accession>C1AF01</accession>
<name>NUSB_MYCBT</name>